<feature type="chain" id="PRO_0000187494" description="Large ribosomal subunit protein bL34">
    <location>
        <begin position="1"/>
        <end position="44"/>
    </location>
</feature>
<feature type="region of interest" description="Disordered" evidence="2">
    <location>
        <begin position="1"/>
        <end position="44"/>
    </location>
</feature>
<feature type="compositionally biased region" description="Basic residues" evidence="2">
    <location>
        <begin position="1"/>
        <end position="23"/>
    </location>
</feature>
<feature type="compositionally biased region" description="Basic residues" evidence="2">
    <location>
        <begin position="30"/>
        <end position="44"/>
    </location>
</feature>
<comment type="similarity">
    <text evidence="1">Belongs to the bacterial ribosomal protein bL34 family.</text>
</comment>
<protein>
    <recommendedName>
        <fullName evidence="1">Large ribosomal subunit protein bL34</fullName>
    </recommendedName>
    <alternativeName>
        <fullName evidence="3">50S ribosomal protein L34</fullName>
    </alternativeName>
</protein>
<sequence>MLRTYQPKKRHRKKVHGFRKRMSTKAGRNVLKRRRLKGRHRLTA</sequence>
<dbReference type="EMBL" id="AE008691">
    <property type="protein sequence ID" value="AAM25905.1"/>
    <property type="molecule type" value="Genomic_DNA"/>
</dbReference>
<dbReference type="RefSeq" id="WP_011026763.1">
    <property type="nucleotide sequence ID" value="NZ_JANUCV010000001.1"/>
</dbReference>
<dbReference type="SMR" id="Q8R6K3"/>
<dbReference type="STRING" id="273068.TTE2802"/>
<dbReference type="KEGG" id="tte:TTE2802"/>
<dbReference type="eggNOG" id="COG0230">
    <property type="taxonomic scope" value="Bacteria"/>
</dbReference>
<dbReference type="HOGENOM" id="CLU_129938_2_0_9"/>
<dbReference type="OrthoDB" id="9804164at2"/>
<dbReference type="Proteomes" id="UP000000555">
    <property type="component" value="Chromosome"/>
</dbReference>
<dbReference type="GO" id="GO:1990904">
    <property type="term" value="C:ribonucleoprotein complex"/>
    <property type="evidence" value="ECO:0007669"/>
    <property type="project" value="UniProtKB-KW"/>
</dbReference>
<dbReference type="GO" id="GO:0005840">
    <property type="term" value="C:ribosome"/>
    <property type="evidence" value="ECO:0007669"/>
    <property type="project" value="UniProtKB-KW"/>
</dbReference>
<dbReference type="GO" id="GO:0003735">
    <property type="term" value="F:structural constituent of ribosome"/>
    <property type="evidence" value="ECO:0007669"/>
    <property type="project" value="InterPro"/>
</dbReference>
<dbReference type="GO" id="GO:0006412">
    <property type="term" value="P:translation"/>
    <property type="evidence" value="ECO:0007669"/>
    <property type="project" value="UniProtKB-UniRule"/>
</dbReference>
<dbReference type="FunFam" id="1.10.287.3980:FF:000001">
    <property type="entry name" value="Mitochondrial ribosomal protein L34"/>
    <property type="match status" value="1"/>
</dbReference>
<dbReference type="Gene3D" id="1.10.287.3980">
    <property type="match status" value="1"/>
</dbReference>
<dbReference type="HAMAP" id="MF_00391">
    <property type="entry name" value="Ribosomal_bL34"/>
    <property type="match status" value="1"/>
</dbReference>
<dbReference type="InterPro" id="IPR000271">
    <property type="entry name" value="Ribosomal_bL34"/>
</dbReference>
<dbReference type="NCBIfam" id="TIGR01030">
    <property type="entry name" value="rpmH_bact"/>
    <property type="match status" value="1"/>
</dbReference>
<dbReference type="PANTHER" id="PTHR14503:SF4">
    <property type="entry name" value="LARGE RIBOSOMAL SUBUNIT PROTEIN BL34M"/>
    <property type="match status" value="1"/>
</dbReference>
<dbReference type="PANTHER" id="PTHR14503">
    <property type="entry name" value="MITOCHONDRIAL RIBOSOMAL PROTEIN 34 FAMILY MEMBER"/>
    <property type="match status" value="1"/>
</dbReference>
<dbReference type="Pfam" id="PF00468">
    <property type="entry name" value="Ribosomal_L34"/>
    <property type="match status" value="1"/>
</dbReference>
<proteinExistence type="inferred from homology"/>
<evidence type="ECO:0000255" key="1">
    <source>
        <dbReference type="HAMAP-Rule" id="MF_00391"/>
    </source>
</evidence>
<evidence type="ECO:0000256" key="2">
    <source>
        <dbReference type="SAM" id="MobiDB-lite"/>
    </source>
</evidence>
<evidence type="ECO:0000305" key="3"/>
<organism>
    <name type="scientific">Caldanaerobacter subterraneus subsp. tengcongensis (strain DSM 15242 / JCM 11007 / NBRC 100824 / MB4)</name>
    <name type="common">Thermoanaerobacter tengcongensis</name>
    <dbReference type="NCBI Taxonomy" id="273068"/>
    <lineage>
        <taxon>Bacteria</taxon>
        <taxon>Bacillati</taxon>
        <taxon>Bacillota</taxon>
        <taxon>Clostridia</taxon>
        <taxon>Thermoanaerobacterales</taxon>
        <taxon>Thermoanaerobacteraceae</taxon>
        <taxon>Caldanaerobacter</taxon>
    </lineage>
</organism>
<accession>Q8R6K3</accession>
<gene>
    <name evidence="1" type="primary">rpmH</name>
    <name type="ordered locus">TTE2802</name>
</gene>
<name>RL34_CALS4</name>
<keyword id="KW-1185">Reference proteome</keyword>
<keyword id="KW-0687">Ribonucleoprotein</keyword>
<keyword id="KW-0689">Ribosomal protein</keyword>
<reference key="1">
    <citation type="journal article" date="2002" name="Genome Res.">
        <title>A complete sequence of the T. tengcongensis genome.</title>
        <authorList>
            <person name="Bao Q."/>
            <person name="Tian Y."/>
            <person name="Li W."/>
            <person name="Xu Z."/>
            <person name="Xuan Z."/>
            <person name="Hu S."/>
            <person name="Dong W."/>
            <person name="Yang J."/>
            <person name="Chen Y."/>
            <person name="Xue Y."/>
            <person name="Xu Y."/>
            <person name="Lai X."/>
            <person name="Huang L."/>
            <person name="Dong X."/>
            <person name="Ma Y."/>
            <person name="Ling L."/>
            <person name="Tan H."/>
            <person name="Chen R."/>
            <person name="Wang J."/>
            <person name="Yu J."/>
            <person name="Yang H."/>
        </authorList>
    </citation>
    <scope>NUCLEOTIDE SEQUENCE [LARGE SCALE GENOMIC DNA]</scope>
    <source>
        <strain>DSM 15242 / JCM 11007 / NBRC 100824 / MB4</strain>
    </source>
</reference>